<evidence type="ECO:0000250" key="1">
    <source>
        <dbReference type="UniProtKB" id="P9WK65"/>
    </source>
</evidence>
<evidence type="ECO:0000255" key="2">
    <source>
        <dbReference type="PROSITE-ProRule" id="PRU00303"/>
    </source>
</evidence>
<evidence type="ECO:0000256" key="3">
    <source>
        <dbReference type="SAM" id="MobiDB-lite"/>
    </source>
</evidence>
<evidence type="ECO:0000305" key="4"/>
<accession>Q9CD80</accession>
<name>LPPX_MYCLE</name>
<keyword id="KW-1003">Cell membrane</keyword>
<keyword id="KW-0134">Cell wall</keyword>
<keyword id="KW-0445">Lipid transport</keyword>
<keyword id="KW-0449">Lipoprotein</keyword>
<keyword id="KW-0472">Membrane</keyword>
<keyword id="KW-0564">Palmitate</keyword>
<keyword id="KW-1185">Reference proteome</keyword>
<keyword id="KW-0964">Secreted</keyword>
<keyword id="KW-0732">Signal</keyword>
<keyword id="KW-0813">Transport</keyword>
<proteinExistence type="inferred from homology"/>
<dbReference type="EMBL" id="AL583917">
    <property type="protein sequence ID" value="CAC29644.1"/>
    <property type="molecule type" value="Genomic_DNA"/>
</dbReference>
<dbReference type="PIR" id="H86925">
    <property type="entry name" value="H86925"/>
</dbReference>
<dbReference type="RefSeq" id="NP_301230.1">
    <property type="nucleotide sequence ID" value="NC_002677.1"/>
</dbReference>
<dbReference type="RefSeq" id="WP_010907555.1">
    <property type="nucleotide sequence ID" value="NC_002677.1"/>
</dbReference>
<dbReference type="SMR" id="Q9CD80"/>
<dbReference type="STRING" id="272631.gene:17573951"/>
<dbReference type="KEGG" id="mle:ML0136"/>
<dbReference type="PATRIC" id="fig|272631.5.peg.204"/>
<dbReference type="Leproma" id="ML0136"/>
<dbReference type="eggNOG" id="ENOG5032I98">
    <property type="taxonomic scope" value="Bacteria"/>
</dbReference>
<dbReference type="HOGENOM" id="CLU_1198710_0_0_11"/>
<dbReference type="OrthoDB" id="4707201at2"/>
<dbReference type="Proteomes" id="UP000000806">
    <property type="component" value="Chromosome"/>
</dbReference>
<dbReference type="GO" id="GO:0009986">
    <property type="term" value="C:cell surface"/>
    <property type="evidence" value="ECO:0007669"/>
    <property type="project" value="UniProtKB-SubCell"/>
</dbReference>
<dbReference type="GO" id="GO:0005576">
    <property type="term" value="C:extracellular region"/>
    <property type="evidence" value="ECO:0007669"/>
    <property type="project" value="UniProtKB-SubCell"/>
</dbReference>
<dbReference type="GO" id="GO:0005886">
    <property type="term" value="C:plasma membrane"/>
    <property type="evidence" value="ECO:0007669"/>
    <property type="project" value="UniProtKB-SubCell"/>
</dbReference>
<dbReference type="GO" id="GO:0006869">
    <property type="term" value="P:lipid transport"/>
    <property type="evidence" value="ECO:0007669"/>
    <property type="project" value="UniProtKB-KW"/>
</dbReference>
<dbReference type="CDD" id="cd16334">
    <property type="entry name" value="LppX-like"/>
    <property type="match status" value="1"/>
</dbReference>
<dbReference type="Gene3D" id="2.50.20.20">
    <property type="match status" value="1"/>
</dbReference>
<dbReference type="InterPro" id="IPR029046">
    <property type="entry name" value="LolA/LolB/LppX"/>
</dbReference>
<dbReference type="InterPro" id="IPR009830">
    <property type="entry name" value="LppX/LprAFG"/>
</dbReference>
<dbReference type="Pfam" id="PF07161">
    <property type="entry name" value="LppX_LprAFG"/>
    <property type="match status" value="1"/>
</dbReference>
<dbReference type="SUPFAM" id="SSF89392">
    <property type="entry name" value="Prokaryotic lipoproteins and lipoprotein localization factors"/>
    <property type="match status" value="1"/>
</dbReference>
<dbReference type="PROSITE" id="PS51257">
    <property type="entry name" value="PROKAR_LIPOPROTEIN"/>
    <property type="match status" value="1"/>
</dbReference>
<organism>
    <name type="scientific">Mycobacterium leprae (strain TN)</name>
    <dbReference type="NCBI Taxonomy" id="272631"/>
    <lineage>
        <taxon>Bacteria</taxon>
        <taxon>Bacillati</taxon>
        <taxon>Actinomycetota</taxon>
        <taxon>Actinomycetes</taxon>
        <taxon>Mycobacteriales</taxon>
        <taxon>Mycobacteriaceae</taxon>
        <taxon>Mycobacterium</taxon>
    </lineage>
</organism>
<reference key="1">
    <citation type="journal article" date="2001" name="Nature">
        <title>Massive gene decay in the leprosy bacillus.</title>
        <authorList>
            <person name="Cole S.T."/>
            <person name="Eiglmeier K."/>
            <person name="Parkhill J."/>
            <person name="James K.D."/>
            <person name="Thomson N.R."/>
            <person name="Wheeler P.R."/>
            <person name="Honore N."/>
            <person name="Garnier T."/>
            <person name="Churcher C.M."/>
            <person name="Harris D.E."/>
            <person name="Mungall K.L."/>
            <person name="Basham D."/>
            <person name="Brown D."/>
            <person name="Chillingworth T."/>
            <person name="Connor R."/>
            <person name="Davies R.M."/>
            <person name="Devlin K."/>
            <person name="Duthoy S."/>
            <person name="Feltwell T."/>
            <person name="Fraser A."/>
            <person name="Hamlin N."/>
            <person name="Holroyd S."/>
            <person name="Hornsby T."/>
            <person name="Jagels K."/>
            <person name="Lacroix C."/>
            <person name="Maclean J."/>
            <person name="Moule S."/>
            <person name="Murphy L.D."/>
            <person name="Oliver K."/>
            <person name="Quail M.A."/>
            <person name="Rajandream M.A."/>
            <person name="Rutherford K.M."/>
            <person name="Rutter S."/>
            <person name="Seeger K."/>
            <person name="Simon S."/>
            <person name="Simmonds M."/>
            <person name="Skelton J."/>
            <person name="Squares R."/>
            <person name="Squares S."/>
            <person name="Stevens K."/>
            <person name="Taylor K."/>
            <person name="Whitehead S."/>
            <person name="Woodward J.R."/>
            <person name="Barrell B.G."/>
        </authorList>
    </citation>
    <scope>NUCLEOTIDE SEQUENCE [LARGE SCALE GENOMIC DNA]</scope>
    <source>
        <strain>TN</strain>
    </source>
</reference>
<comment type="function">
    <text evidence="1">Might be involved in translocating phthiocerol dimycocerosates (PDIM) from the cell membrane to the outer membrane; PDIM forms part of the cell wall.</text>
</comment>
<comment type="subcellular location">
    <subcellularLocation>
        <location evidence="2">Cell membrane</location>
        <topology evidence="2">Lipid-anchor</topology>
    </subcellularLocation>
    <subcellularLocation>
        <location evidence="1">Cell surface</location>
    </subcellularLocation>
    <subcellularLocation>
        <location evidence="1">Secreted</location>
        <location evidence="1">Cell wall</location>
    </subcellularLocation>
    <subcellularLocation>
        <location evidence="1">Secreted</location>
    </subcellularLocation>
</comment>
<comment type="domain">
    <text evidence="1">Forms a U-shaped beta-half-barrel with a large hydrophobic cavity which is large enough to hold a single phthiocerol dimycocerosate (PDIM) molecule.</text>
</comment>
<comment type="PTM">
    <text evidence="1">Modified by Lgt on Cys-27 with an S-linked diacylglycerol with a mixture of C16 and C19 fatty acids (palmitic and tuberculostearic acid), signal peptide is removed by LspA, modified by Lnt with an amide-linked mixture of C16 and C19 fatty acids.</text>
</comment>
<comment type="similarity">
    <text evidence="4">Belongs to the LppX/LprAFG lipoprotein family.</text>
</comment>
<feature type="signal peptide" evidence="2">
    <location>
        <begin position="1"/>
        <end position="26"/>
    </location>
</feature>
<feature type="chain" id="PRO_0000018120" description="Putative phthiocerol dimycocerosate transporter LppX">
    <location>
        <begin position="27"/>
        <end position="233"/>
    </location>
</feature>
<feature type="region of interest" description="Disordered" evidence="3">
    <location>
        <begin position="31"/>
        <end position="50"/>
    </location>
</feature>
<feature type="compositionally biased region" description="Low complexity" evidence="3">
    <location>
        <begin position="35"/>
        <end position="49"/>
    </location>
</feature>
<feature type="lipid moiety-binding region" description="N-palmitoyl cysteine" evidence="2">
    <location>
        <position position="27"/>
    </location>
</feature>
<feature type="lipid moiety-binding region" description="S-diacylglycerol cysteine" evidence="2">
    <location>
        <position position="27"/>
    </location>
</feature>
<sequence length="233" mass="24411">MNDRKWVTSSVMLVTLSACLALGLSGCSSTKPDAQEQSSSSSPASSDPALTAEIKQSLETTKALSSVHVVVQTTGKVDALLGISNADVDVQANPLAVKGTCTYNDQPGVPFRVLGDNISVKLFDDWSNLGSISDLSTSHVLDPNTGITQVLSGVINLQAQGTEVVDRIPTNKITGTVPTSSVKMLDPKAKGSKLATVWIAQDGSHHLVRASIDLGSGSIQLTQSKWNEPVNTN</sequence>
<protein>
    <recommendedName>
        <fullName>Putative phthiocerol dimycocerosate transporter LppX</fullName>
    </recommendedName>
    <alternativeName>
        <fullName>Lipoprotein LppX</fullName>
    </alternativeName>
</protein>
<gene>
    <name type="primary">lppX</name>
    <name type="ordered locus">ML0136</name>
</gene>